<proteinExistence type="inferred from homology"/>
<gene>
    <name evidence="1" type="primary">apaH</name>
    <name type="ordered locus">NE0613</name>
</gene>
<sequence length="268" mass="30483">MATYAIGDLQGCHRHFLELLDLIGFNATRDRLWLVGDIVNRGPDSLSLLRTLIELGDAVTMVLGNHDLHLLAVAAGSIRQQHGDTLQPVLEASDSSRLLDWLRHQQLFHHEDEYVLVHAGLLPNWSIEQAQILAQEVETIIRGDRFQTFSRSMYGNVPDHWHDRLQGEDRWRVIINAMTRMRVCSPEGRMNFSCKGELSSVPDGLLPWFEIPWRASKDTTIVFGHWSALGLHLTPNLIALDTGCVWQGCLTSVRLEDRKVFQVPCVRH</sequence>
<keyword id="KW-0378">Hydrolase</keyword>
<keyword id="KW-1185">Reference proteome</keyword>
<reference key="1">
    <citation type="journal article" date="2003" name="J. Bacteriol.">
        <title>Complete genome sequence of the ammonia-oxidizing bacterium and obligate chemolithoautotroph Nitrosomonas europaea.</title>
        <authorList>
            <person name="Chain P."/>
            <person name="Lamerdin J.E."/>
            <person name="Larimer F.W."/>
            <person name="Regala W."/>
            <person name="Lao V."/>
            <person name="Land M.L."/>
            <person name="Hauser L."/>
            <person name="Hooper A.B."/>
            <person name="Klotz M.G."/>
            <person name="Norton J."/>
            <person name="Sayavedra-Soto L.A."/>
            <person name="Arciero D.M."/>
            <person name="Hommes N.G."/>
            <person name="Whittaker M.M."/>
            <person name="Arp D.J."/>
        </authorList>
    </citation>
    <scope>NUCLEOTIDE SEQUENCE [LARGE SCALE GENOMIC DNA]</scope>
    <source>
        <strain>ATCC 19718 / CIP 103999 / KCTC 2705 / NBRC 14298</strain>
    </source>
</reference>
<feature type="chain" id="PRO_0000198000" description="Bis(5'-nucleosyl)-tetraphosphatase, symmetrical">
    <location>
        <begin position="1"/>
        <end position="268"/>
    </location>
</feature>
<organism>
    <name type="scientific">Nitrosomonas europaea (strain ATCC 19718 / CIP 103999 / KCTC 2705 / NBRC 14298)</name>
    <dbReference type="NCBI Taxonomy" id="228410"/>
    <lineage>
        <taxon>Bacteria</taxon>
        <taxon>Pseudomonadati</taxon>
        <taxon>Pseudomonadota</taxon>
        <taxon>Betaproteobacteria</taxon>
        <taxon>Nitrosomonadales</taxon>
        <taxon>Nitrosomonadaceae</taxon>
        <taxon>Nitrosomonas</taxon>
    </lineage>
</organism>
<name>APAH_NITEU</name>
<accession>Q82WQ0</accession>
<dbReference type="EC" id="3.6.1.41" evidence="1"/>
<dbReference type="EMBL" id="AL954747">
    <property type="protein sequence ID" value="CAD84524.1"/>
    <property type="molecule type" value="Genomic_DNA"/>
</dbReference>
<dbReference type="RefSeq" id="WP_011111239.1">
    <property type="nucleotide sequence ID" value="NC_004757.1"/>
</dbReference>
<dbReference type="SMR" id="Q82WQ0"/>
<dbReference type="STRING" id="228410.NE0613"/>
<dbReference type="GeneID" id="87103812"/>
<dbReference type="KEGG" id="neu:NE0613"/>
<dbReference type="eggNOG" id="COG0639">
    <property type="taxonomic scope" value="Bacteria"/>
</dbReference>
<dbReference type="HOGENOM" id="CLU_056184_1_0_4"/>
<dbReference type="OrthoDB" id="9807890at2"/>
<dbReference type="PhylomeDB" id="Q82WQ0"/>
<dbReference type="Proteomes" id="UP000001416">
    <property type="component" value="Chromosome"/>
</dbReference>
<dbReference type="GO" id="GO:0008803">
    <property type="term" value="F:bis(5'-nucleosyl)-tetraphosphatase (symmetrical) activity"/>
    <property type="evidence" value="ECO:0007669"/>
    <property type="project" value="UniProtKB-UniRule"/>
</dbReference>
<dbReference type="CDD" id="cd07422">
    <property type="entry name" value="MPP_ApaH"/>
    <property type="match status" value="1"/>
</dbReference>
<dbReference type="Gene3D" id="3.60.21.10">
    <property type="match status" value="1"/>
</dbReference>
<dbReference type="HAMAP" id="MF_00199">
    <property type="entry name" value="ApaH"/>
    <property type="match status" value="1"/>
</dbReference>
<dbReference type="InterPro" id="IPR004617">
    <property type="entry name" value="ApaH"/>
</dbReference>
<dbReference type="InterPro" id="IPR004843">
    <property type="entry name" value="Calcineurin-like_PHP_ApaH"/>
</dbReference>
<dbReference type="InterPro" id="IPR029052">
    <property type="entry name" value="Metallo-depent_PP-like"/>
</dbReference>
<dbReference type="NCBIfam" id="TIGR00668">
    <property type="entry name" value="apaH"/>
    <property type="match status" value="1"/>
</dbReference>
<dbReference type="NCBIfam" id="NF001204">
    <property type="entry name" value="PRK00166.1"/>
    <property type="match status" value="1"/>
</dbReference>
<dbReference type="PANTHER" id="PTHR40942">
    <property type="match status" value="1"/>
</dbReference>
<dbReference type="PANTHER" id="PTHR40942:SF4">
    <property type="entry name" value="CYTOCHROME C5"/>
    <property type="match status" value="1"/>
</dbReference>
<dbReference type="Pfam" id="PF00149">
    <property type="entry name" value="Metallophos"/>
    <property type="match status" value="1"/>
</dbReference>
<dbReference type="PIRSF" id="PIRSF000903">
    <property type="entry name" value="B5n-ttraPtase_sm"/>
    <property type="match status" value="1"/>
</dbReference>
<dbReference type="SUPFAM" id="SSF56300">
    <property type="entry name" value="Metallo-dependent phosphatases"/>
    <property type="match status" value="1"/>
</dbReference>
<comment type="function">
    <text evidence="1">Hydrolyzes diadenosine 5',5'''-P1,P4-tetraphosphate to yield ADP.</text>
</comment>
<comment type="catalytic activity">
    <reaction evidence="1">
        <text>P(1),P(4)-bis(5'-adenosyl) tetraphosphate + H2O = 2 ADP + 2 H(+)</text>
        <dbReference type="Rhea" id="RHEA:24252"/>
        <dbReference type="ChEBI" id="CHEBI:15377"/>
        <dbReference type="ChEBI" id="CHEBI:15378"/>
        <dbReference type="ChEBI" id="CHEBI:58141"/>
        <dbReference type="ChEBI" id="CHEBI:456216"/>
        <dbReference type="EC" id="3.6.1.41"/>
    </reaction>
</comment>
<comment type="similarity">
    <text evidence="1">Belongs to the Ap4A hydrolase family.</text>
</comment>
<evidence type="ECO:0000255" key="1">
    <source>
        <dbReference type="HAMAP-Rule" id="MF_00199"/>
    </source>
</evidence>
<protein>
    <recommendedName>
        <fullName evidence="1">Bis(5'-nucleosyl)-tetraphosphatase, symmetrical</fullName>
        <ecNumber evidence="1">3.6.1.41</ecNumber>
    </recommendedName>
    <alternativeName>
        <fullName evidence="1">Ap4A hydrolase</fullName>
    </alternativeName>
    <alternativeName>
        <fullName evidence="1">Diadenosine 5',5'''-P1,P4-tetraphosphate pyrophosphohydrolase</fullName>
    </alternativeName>
    <alternativeName>
        <fullName evidence="1">Diadenosine tetraphosphatase</fullName>
    </alternativeName>
</protein>